<sequence length="538" mass="59992">MSTYPINAPGQSADAAVLIVGGGPTGLIAANELLRRGVSCRMIDRLPVAHQTSKSCTIHARSMEMMEHIGIAARYIETGVRSNGFTFNFENTDANALLDFSVLPGRYPFITIYNQNETERVLRHDLEATYSFQPEWGTQLLALNQDENGIRADLRLKDGTKQTISPRWVIGADGVRSRVRECLGIAYEGEDYEENVLQMMDVGIQDFEAGDDWIHYFIGQDKFVFVTKLPGSNYRVIISDLGGANKSNLEETREAFQGYLSSFDDHATLDEPRWATKWRVWKRMATAYRKGNVFLAGDAAHCHSPSGGSGMNVGMQDAFNLGWKIAMVERGEAKPDLLDTYHTERTPVAQQLLEGTHAMHEIIMGHGKGLTDRIELTQAPGWHDAATYRVSGMSYNYRDQLVSFNDDRLAGPSAGDRIPDAELAPRIRLFDLVRNTRPTLLVAPATEAEVAEAEKLRDLIREQWPLVKPVLVRPQGSEESIEGDVHVDSYGQLKREWGDNAKGWAALLRPDNYIHARAGLDRGDLLVQAIDAMLVRCA</sequence>
<protein>
    <recommendedName>
        <fullName>Pentachlorophenol 4-monooxygenase</fullName>
        <ecNumber evidence="3 4">1.14.13.50</ecNumber>
    </recommendedName>
    <alternativeName>
        <fullName>Pentachlorophenol hydroxylase</fullName>
    </alternativeName>
</protein>
<dbReference type="EC" id="1.14.13.50" evidence="3 4"/>
<dbReference type="EMBL" id="U12290">
    <property type="protein sequence ID" value="AAF15368.2"/>
    <property type="molecule type" value="Genomic_DNA"/>
</dbReference>
<dbReference type="SMR" id="P42535"/>
<dbReference type="BindingDB" id="P42535"/>
<dbReference type="eggNOG" id="COG0654">
    <property type="taxonomic scope" value="Bacteria"/>
</dbReference>
<dbReference type="BioCyc" id="MetaCyc:PCPBFLAVO-MONOMER"/>
<dbReference type="BRENDA" id="1.14.13.50">
    <property type="organism ID" value="7700"/>
</dbReference>
<dbReference type="SABIO-RK" id="P42535"/>
<dbReference type="UniPathway" id="UPA00691"/>
<dbReference type="GO" id="GO:0071949">
    <property type="term" value="F:FAD binding"/>
    <property type="evidence" value="ECO:0007669"/>
    <property type="project" value="InterPro"/>
</dbReference>
<dbReference type="GO" id="GO:0018677">
    <property type="term" value="F:pentachlorophenol monooxygenase activity"/>
    <property type="evidence" value="ECO:0007669"/>
    <property type="project" value="UniProtKB-EC"/>
</dbReference>
<dbReference type="GO" id="GO:0019338">
    <property type="term" value="P:pentachlorophenol catabolic process"/>
    <property type="evidence" value="ECO:0007669"/>
    <property type="project" value="UniProtKB-UniPathway"/>
</dbReference>
<dbReference type="Gene3D" id="3.30.70.2450">
    <property type="match status" value="1"/>
</dbReference>
<dbReference type="Gene3D" id="3.40.30.120">
    <property type="match status" value="1"/>
</dbReference>
<dbReference type="Gene3D" id="3.50.50.60">
    <property type="entry name" value="FAD/NAD(P)-binding domain"/>
    <property type="match status" value="1"/>
</dbReference>
<dbReference type="InterPro" id="IPR002938">
    <property type="entry name" value="FAD-bd"/>
</dbReference>
<dbReference type="InterPro" id="IPR036188">
    <property type="entry name" value="FAD/NAD-bd_sf"/>
</dbReference>
<dbReference type="InterPro" id="IPR050641">
    <property type="entry name" value="RIFMO-like"/>
</dbReference>
<dbReference type="PANTHER" id="PTHR43004:SF19">
    <property type="entry name" value="BINDING MONOOXYGENASE, PUTATIVE (JCVI)-RELATED"/>
    <property type="match status" value="1"/>
</dbReference>
<dbReference type="PANTHER" id="PTHR43004">
    <property type="entry name" value="TRK SYSTEM POTASSIUM UPTAKE PROTEIN"/>
    <property type="match status" value="1"/>
</dbReference>
<dbReference type="Pfam" id="PF01494">
    <property type="entry name" value="FAD_binding_3"/>
    <property type="match status" value="1"/>
</dbReference>
<dbReference type="PRINTS" id="PR00420">
    <property type="entry name" value="RNGMNOXGNASE"/>
</dbReference>
<dbReference type="SUPFAM" id="SSF51905">
    <property type="entry name" value="FAD/NAD(P)-binding domain"/>
    <property type="match status" value="1"/>
</dbReference>
<keyword id="KW-0058">Aromatic hydrocarbons catabolism</keyword>
<keyword id="KW-0903">Direct protein sequencing</keyword>
<keyword id="KW-0274">FAD</keyword>
<keyword id="KW-0285">Flavoprotein</keyword>
<keyword id="KW-0503">Monooxygenase</keyword>
<keyword id="KW-0521">NADP</keyword>
<keyword id="KW-0560">Oxidoreductase</keyword>
<comment type="function">
    <text evidence="2 3">Dechlorination of pentachlorophenol to tetrachlorobenzoquinone. Also removes hydrogen and nitro, amino, and cyano groups from benzene ring at the para position in relation to the hydroxyl of phenol.</text>
</comment>
<comment type="catalytic activity">
    <reaction evidence="3 4">
        <text>pentachlorophenol + NADPH + O2 + H(+) = 2,3,5,6-tetrachloro-1,4-benzoquinone + chloride + NADP(+) + H2O</text>
        <dbReference type="Rhea" id="RHEA:18685"/>
        <dbReference type="ChEBI" id="CHEBI:15377"/>
        <dbReference type="ChEBI" id="CHEBI:15378"/>
        <dbReference type="ChEBI" id="CHEBI:15379"/>
        <dbReference type="ChEBI" id="CHEBI:17996"/>
        <dbReference type="ChEBI" id="CHEBI:36703"/>
        <dbReference type="ChEBI" id="CHEBI:57783"/>
        <dbReference type="ChEBI" id="CHEBI:58217"/>
        <dbReference type="ChEBI" id="CHEBI:58349"/>
        <dbReference type="EC" id="1.14.13.50"/>
    </reaction>
</comment>
<comment type="catalytic activity">
    <reaction evidence="3 4">
        <text>2,3,5,6-tetrachlorophenol + NADPH + O2 = 2,3,5,6-tetrachlorohydroquinone + NADP(+) + H2O</text>
        <dbReference type="Rhea" id="RHEA:11440"/>
        <dbReference type="ChEBI" id="CHEBI:15377"/>
        <dbReference type="ChEBI" id="CHEBI:15379"/>
        <dbReference type="ChEBI" id="CHEBI:57783"/>
        <dbReference type="ChEBI" id="CHEBI:57994"/>
        <dbReference type="ChEBI" id="CHEBI:58349"/>
        <dbReference type="ChEBI" id="CHEBI:59815"/>
        <dbReference type="EC" id="1.14.13.50"/>
    </reaction>
</comment>
<comment type="cofactor">
    <cofactor evidence="3">
        <name>FAD</name>
        <dbReference type="ChEBI" id="CHEBI:57692"/>
    </cofactor>
</comment>
<comment type="biophysicochemical properties">
    <kinetics>
        <KM evidence="3">1 mM for pentachlorophenol</KM>
        <KM evidence="3">5.6 mM for 2,3,5,6-tetrachlorophenol</KM>
        <text evidence="3">kcat is 0.024 sec(-1) with pentachlorophenol as substrate. kcat is 0.32 sec(-1) with 2,3,5,6-tetrachlorophenol as substrate.</text>
    </kinetics>
</comment>
<comment type="pathway">
    <text>Xenobiotic degradation; pentachlorophenol degradation.</text>
</comment>
<comment type="subunit">
    <text evidence="3">Homodimer.</text>
</comment>
<comment type="induction">
    <text evidence="2">By polychlorinated phenols.</text>
</comment>
<comment type="similarity">
    <text evidence="6">Belongs to the PheA/TfdB FAD monooxygenase family.</text>
</comment>
<evidence type="ECO:0000255" key="1"/>
<evidence type="ECO:0000269" key="2">
    <source>
    </source>
</evidence>
<evidence type="ECO:0000269" key="3">
    <source>
    </source>
</evidence>
<evidence type="ECO:0000269" key="4">
    <source>
    </source>
</evidence>
<evidence type="ECO:0000269" key="5">
    <source>
    </source>
</evidence>
<evidence type="ECO:0000305" key="6"/>
<organism>
    <name type="scientific">Sphingobium chlorophenolicum</name>
    <dbReference type="NCBI Taxonomy" id="46429"/>
    <lineage>
        <taxon>Bacteria</taxon>
        <taxon>Pseudomonadati</taxon>
        <taxon>Pseudomonadota</taxon>
        <taxon>Alphaproteobacteria</taxon>
        <taxon>Sphingomonadales</taxon>
        <taxon>Sphingomonadaceae</taxon>
        <taxon>Sphingobium</taxon>
    </lineage>
</organism>
<gene>
    <name type="primary">pcpB</name>
</gene>
<proteinExistence type="evidence at protein level"/>
<name>PCPB_SPHCR</name>
<feature type="initiator methionine" description="Removed" evidence="5">
    <location>
        <position position="1"/>
    </location>
</feature>
<feature type="chain" id="PRO_0000214044" description="Pentachlorophenol 4-monooxygenase">
    <location>
        <begin position="2"/>
        <end position="538"/>
    </location>
</feature>
<feature type="binding site" evidence="1">
    <location>
        <begin position="16"/>
        <end position="45"/>
    </location>
    <ligand>
        <name>FAD</name>
        <dbReference type="ChEBI" id="CHEBI:57692"/>
    </ligand>
</feature>
<feature type="binding site" evidence="1">
    <location>
        <begin position="288"/>
        <end position="298"/>
    </location>
    <ligand>
        <name>FAD</name>
        <dbReference type="ChEBI" id="CHEBI:57692"/>
    </ligand>
</feature>
<reference key="1">
    <citation type="journal article" date="1993" name="J. Bacteriol.">
        <title>Cloning, sequence analysis, and expression of the Flavobacterium pentachlorophenol-4-monooxygenase gene in Escherichia coli.</title>
        <authorList>
            <person name="Orser C.S."/>
            <person name="Lange C.C."/>
            <person name="Xun L."/>
            <person name="Zahrt T.C."/>
            <person name="Schneider B.J."/>
        </authorList>
    </citation>
    <scope>NUCLEOTIDE SEQUENCE [GENOMIC DNA]</scope>
    <scope>PROTEIN SEQUENCE OF 2-14</scope>
    <source>
        <strain>ATCC 39723 / DSM 6824 / L-1</strain>
    </source>
</reference>
<reference key="2">
    <citation type="journal article" date="2002" name="J. Bacteriol.">
        <title>Organization and regulation of pentachlorophenol-degrading genes in Sphingobium chlorophenolicum ATCC 39723.</title>
        <authorList>
            <person name="Cai M."/>
            <person name="Xun L."/>
        </authorList>
    </citation>
    <scope>SEQUENCE REVISION TO 536</scope>
    <scope>FUNCTION</scope>
    <scope>INDUCTION</scope>
    <source>
        <strain>ATCC 39723 / DSM 6824 / L-1</strain>
    </source>
</reference>
<reference key="3">
    <citation type="journal article" date="2012" name="Biochemistry">
        <title>Pentachlorophenol hydroxylase, a poorly functioning enzyme required for degradation of pentachlorophenol by Sphingobium chlorophenolicum.</title>
        <authorList>
            <person name="Hlouchova K."/>
            <person name="Rudolph J."/>
            <person name="Pietari J.M."/>
            <person name="Behlen L.S."/>
            <person name="Copley S.D."/>
        </authorList>
    </citation>
    <scope>FUNCTION</scope>
    <scope>CATALYTIC ACTIVITY</scope>
    <scope>SUBUNIT</scope>
    <scope>COFACTOR</scope>
    <scope>BIOPHYSICOCHEMICAL PROPERTIES</scope>
</reference>
<reference key="4">
    <citation type="journal article" date="2014" name="Biochemistry">
        <title>A radical intermediate in the conversion of pentachlorophenol to tetrachlorohydroquinone by Sphingobium chlorophenolicum.</title>
        <authorList>
            <person name="Rudolph J."/>
            <person name="Erbse A.H."/>
            <person name="Behlen L.S."/>
            <person name="Copley S.D."/>
        </authorList>
    </citation>
    <scope>CATALYTIC ACTIVITY</scope>
    <scope>REACTION MECHANISM</scope>
</reference>
<accession>P42535</accession>
<accession>Q8KMS8</accession>